<evidence type="ECO:0000256" key="1">
    <source>
        <dbReference type="SAM" id="MobiDB-lite"/>
    </source>
</evidence>
<feature type="chain" id="PRO_0000342565" description="Uncharacterized protein DR5">
    <location>
        <begin position="1"/>
        <end position="145"/>
    </location>
</feature>
<feature type="region of interest" description="Disordered" evidence="1">
    <location>
        <begin position="71"/>
        <end position="95"/>
    </location>
</feature>
<keyword id="KW-1185">Reference proteome</keyword>
<accession>Q89544</accession>
<reference key="1">
    <citation type="journal article" date="1995" name="Virology">
        <title>The DNA sequence of human herpesvirus-6: structure, coding content, and genome evolution.</title>
        <authorList>
            <person name="Gompels U.A."/>
            <person name="Nicholas J."/>
            <person name="Lawrence G.L."/>
            <person name="Jones M."/>
            <person name="Thomson B.J."/>
            <person name="Martin M.E.D."/>
            <person name="Efstathiou S."/>
            <person name="Craxton M.A."/>
            <person name="Macaulay H.A."/>
        </authorList>
    </citation>
    <scope>NUCLEOTIDE SEQUENCE [LARGE SCALE GENOMIC DNA]</scope>
</reference>
<dbReference type="EMBL" id="X83413">
    <property type="status" value="NOT_ANNOTATED_CDS"/>
    <property type="molecule type" value="Genomic_DNA"/>
</dbReference>
<dbReference type="Proteomes" id="UP000009295">
    <property type="component" value="Segment"/>
</dbReference>
<sequence>MRTRAGPSKQSRDNLGLRVDFSFFMPAYVGVLSRLCRRGRVCAGPSRARDRGCDGNCALLRFRNEGVRPIGARGRGRTYTKGGSSRSPASWAEQGRPPFTLSVSGTVLCLGRGLPAVRKAGFCRRVSVHGYVAFGTYGKGTYGEG</sequence>
<name>DR5_HHV6U</name>
<proteinExistence type="predicted"/>
<organismHost>
    <name type="scientific">Homo sapiens</name>
    <name type="common">Human</name>
    <dbReference type="NCBI Taxonomy" id="9606"/>
</organismHost>
<organism>
    <name type="scientific">Human herpesvirus 6A (strain Uganda-1102)</name>
    <name type="common">HHV-6 variant A</name>
    <name type="synonym">Human B lymphotropic virus</name>
    <dbReference type="NCBI Taxonomy" id="10370"/>
    <lineage>
        <taxon>Viruses</taxon>
        <taxon>Duplodnaviria</taxon>
        <taxon>Heunggongvirae</taxon>
        <taxon>Peploviricota</taxon>
        <taxon>Herviviricetes</taxon>
        <taxon>Herpesvirales</taxon>
        <taxon>Orthoherpesviridae</taxon>
        <taxon>Betaherpesvirinae</taxon>
        <taxon>Roseolovirus</taxon>
        <taxon>Roseolovirus humanbeta6a</taxon>
        <taxon>Human betaherpesvirus 6A</taxon>
    </lineage>
</organism>
<protein>
    <recommendedName>
        <fullName>Uncharacterized protein DR5</fullName>
    </recommendedName>
</protein>
<gene>
    <name type="primary">DR5L</name>
</gene>
<gene>
    <name type="primary">DR5R</name>
</gene>